<keyword id="KW-1185">Reference proteome</keyword>
<evidence type="ECO:0000256" key="1">
    <source>
        <dbReference type="SAM" id="MobiDB-lite"/>
    </source>
</evidence>
<evidence type="ECO:0000305" key="2"/>
<reference key="1">
    <citation type="journal article" date="2001" name="Proc. Natl. Acad. Sci. U.S.A.">
        <title>Genome sequence of an industrial microorganism Streptomyces avermitilis: deducing the ability of producing secondary metabolites.</title>
        <authorList>
            <person name="Omura S."/>
            <person name="Ikeda H."/>
            <person name="Ishikawa J."/>
            <person name="Hanamoto A."/>
            <person name="Takahashi C."/>
            <person name="Shinose M."/>
            <person name="Takahashi Y."/>
            <person name="Horikawa H."/>
            <person name="Nakazawa H."/>
            <person name="Osonoe T."/>
            <person name="Kikuchi H."/>
            <person name="Shiba T."/>
            <person name="Sakaki Y."/>
            <person name="Hattori M."/>
        </authorList>
    </citation>
    <scope>NUCLEOTIDE SEQUENCE [LARGE SCALE GENOMIC DNA]</scope>
    <source>
        <strain>ATCC 31267 / DSM 46492 / JCM 5070 / NBRC 14893 / NCIMB 12804 / NRRL 8165 / MA-4680</strain>
    </source>
</reference>
<reference key="2">
    <citation type="journal article" date="2003" name="Nat. Biotechnol.">
        <title>Complete genome sequence and comparative analysis of the industrial microorganism Streptomyces avermitilis.</title>
        <authorList>
            <person name="Ikeda H."/>
            <person name="Ishikawa J."/>
            <person name="Hanamoto A."/>
            <person name="Shinose M."/>
            <person name="Kikuchi H."/>
            <person name="Shiba T."/>
            <person name="Sakaki Y."/>
            <person name="Hattori M."/>
            <person name="Omura S."/>
        </authorList>
    </citation>
    <scope>NUCLEOTIDE SEQUENCE [LARGE SCALE GENOMIC DNA]</scope>
    <source>
        <strain>ATCC 31267 / DSM 46492 / JCM 5070 / NBRC 14893 / NCIMB 12804 / NRRL 8165 / MA-4680</strain>
    </source>
</reference>
<protein>
    <recommendedName>
        <fullName>UPF0337 protein SAV_1088</fullName>
    </recommendedName>
</protein>
<name>Y1088_STRAW</name>
<accession>Q82P45</accession>
<gene>
    <name type="ordered locus">SAV_1088</name>
</gene>
<comment type="similarity">
    <text evidence="2">Belongs to the UPF0337 (CsbD) family.</text>
</comment>
<dbReference type="EMBL" id="BA000030">
    <property type="protein sequence ID" value="BAC68798.1"/>
    <property type="molecule type" value="Genomic_DNA"/>
</dbReference>
<dbReference type="RefSeq" id="WP_010982526.1">
    <property type="nucleotide sequence ID" value="NZ_JZJK01000078.1"/>
</dbReference>
<dbReference type="SMR" id="Q82P45"/>
<dbReference type="GeneID" id="41544636"/>
<dbReference type="KEGG" id="sma:SAVERM_1088"/>
<dbReference type="HOGENOM" id="CLU_135567_1_1_11"/>
<dbReference type="OrthoDB" id="2143260at2"/>
<dbReference type="Proteomes" id="UP000000428">
    <property type="component" value="Chromosome"/>
</dbReference>
<dbReference type="Gene3D" id="1.10.1470.10">
    <property type="entry name" value="YjbJ"/>
    <property type="match status" value="1"/>
</dbReference>
<dbReference type="InterPro" id="IPR008462">
    <property type="entry name" value="CsbD"/>
</dbReference>
<dbReference type="InterPro" id="IPR036629">
    <property type="entry name" value="YjbJ_sf"/>
</dbReference>
<dbReference type="Pfam" id="PF05532">
    <property type="entry name" value="CsbD"/>
    <property type="match status" value="1"/>
</dbReference>
<dbReference type="SUPFAM" id="SSF69047">
    <property type="entry name" value="Hypothetical protein YjbJ"/>
    <property type="match status" value="1"/>
</dbReference>
<proteinExistence type="inferred from homology"/>
<organism>
    <name type="scientific">Streptomyces avermitilis (strain ATCC 31267 / DSM 46492 / JCM 5070 / NBRC 14893 / NCIMB 12804 / NRRL 8165 / MA-4680)</name>
    <dbReference type="NCBI Taxonomy" id="227882"/>
    <lineage>
        <taxon>Bacteria</taxon>
        <taxon>Bacillati</taxon>
        <taxon>Actinomycetota</taxon>
        <taxon>Actinomycetes</taxon>
        <taxon>Kitasatosporales</taxon>
        <taxon>Streptomycetaceae</taxon>
        <taxon>Streptomyces</taxon>
    </lineage>
</organism>
<feature type="chain" id="PRO_0000210046" description="UPF0337 protein SAV_1088">
    <location>
        <begin position="1"/>
        <end position="57"/>
    </location>
</feature>
<feature type="region of interest" description="Disordered" evidence="1">
    <location>
        <begin position="1"/>
        <end position="57"/>
    </location>
</feature>
<feature type="compositionally biased region" description="Basic and acidic residues" evidence="1">
    <location>
        <begin position="1"/>
        <end position="15"/>
    </location>
</feature>
<feature type="compositionally biased region" description="Basic and acidic residues" evidence="1">
    <location>
        <begin position="36"/>
        <end position="57"/>
    </location>
</feature>
<sequence length="57" mass="6044">MAGDQKAKAKMEQAKGKAKAAAGRAVGNERMAAEGQAEKSKGDARQAKEKTKDVFKH</sequence>